<sequence>MATTNQLIRKGRTTLVEKSKVPALKACPQRRGVCTRVYTTTPKKPNSAMRKVCRVRLTSGFEVSSYIGGEGHNLQEHSVVLIRGGRVKDLPGVRYHTVRGSLDCAGVKDRNQSRSKYGAKRPKK</sequence>
<reference key="1">
    <citation type="journal article" date="2008" name="J. Bacteriol.">
        <title>Comparative genome sequence analysis of multidrug-resistant Acinetobacter baumannii.</title>
        <authorList>
            <person name="Adams M.D."/>
            <person name="Goglin K."/>
            <person name="Molyneaux N."/>
            <person name="Hujer K.M."/>
            <person name="Lavender H."/>
            <person name="Jamison J.J."/>
            <person name="MacDonald I.J."/>
            <person name="Martin K.M."/>
            <person name="Russo T."/>
            <person name="Campagnari A.A."/>
            <person name="Hujer A.M."/>
            <person name="Bonomo R.A."/>
            <person name="Gill S.R."/>
        </authorList>
    </citation>
    <scope>NUCLEOTIDE SEQUENCE [LARGE SCALE GENOMIC DNA]</scope>
    <source>
        <strain>AB307-0294</strain>
    </source>
</reference>
<name>RS12_ACIB3</name>
<comment type="function">
    <text evidence="2">With S4 and S5 plays an important role in translational accuracy.</text>
</comment>
<comment type="function">
    <text evidence="2">Interacts with and stabilizes bases of the 16S rRNA that are involved in tRNA selection in the A site and with the mRNA backbone. Located at the interface of the 30S and 50S subunits, it traverses the body of the 30S subunit contacting proteins on the other side and probably holding the rRNA structure together. The combined cluster of proteins S8, S12 and S17 appears to hold together the shoulder and platform of the 30S subunit.</text>
</comment>
<comment type="subunit">
    <text evidence="2">Part of the 30S ribosomal subunit. Contacts proteins S8 and S17. May interact with IF1 in the 30S initiation complex.</text>
</comment>
<comment type="similarity">
    <text evidence="2">Belongs to the universal ribosomal protein uS12 family.</text>
</comment>
<evidence type="ECO:0000250" key="1"/>
<evidence type="ECO:0000255" key="2">
    <source>
        <dbReference type="HAMAP-Rule" id="MF_00403"/>
    </source>
</evidence>
<evidence type="ECO:0000305" key="3"/>
<organism>
    <name type="scientific">Acinetobacter baumannii (strain AB307-0294)</name>
    <dbReference type="NCBI Taxonomy" id="557600"/>
    <lineage>
        <taxon>Bacteria</taxon>
        <taxon>Pseudomonadati</taxon>
        <taxon>Pseudomonadota</taxon>
        <taxon>Gammaproteobacteria</taxon>
        <taxon>Moraxellales</taxon>
        <taxon>Moraxellaceae</taxon>
        <taxon>Acinetobacter</taxon>
        <taxon>Acinetobacter calcoaceticus/baumannii complex</taxon>
    </lineage>
</organism>
<gene>
    <name evidence="2" type="primary">rpsL</name>
    <name type="ordered locus">ABBFA_002749</name>
</gene>
<dbReference type="EMBL" id="CP001172">
    <property type="protein sequence ID" value="ACJ57574.1"/>
    <property type="molecule type" value="Genomic_DNA"/>
</dbReference>
<dbReference type="RefSeq" id="WP_000246374.1">
    <property type="nucleotide sequence ID" value="NZ_CP001172.1"/>
</dbReference>
<dbReference type="SMR" id="B7GYN0"/>
<dbReference type="GeneID" id="92892795"/>
<dbReference type="HOGENOM" id="CLU_104295_1_2_6"/>
<dbReference type="Proteomes" id="UP000006924">
    <property type="component" value="Chromosome"/>
</dbReference>
<dbReference type="GO" id="GO:0015935">
    <property type="term" value="C:small ribosomal subunit"/>
    <property type="evidence" value="ECO:0007669"/>
    <property type="project" value="InterPro"/>
</dbReference>
<dbReference type="GO" id="GO:0019843">
    <property type="term" value="F:rRNA binding"/>
    <property type="evidence" value="ECO:0007669"/>
    <property type="project" value="UniProtKB-UniRule"/>
</dbReference>
<dbReference type="GO" id="GO:0003735">
    <property type="term" value="F:structural constituent of ribosome"/>
    <property type="evidence" value="ECO:0007669"/>
    <property type="project" value="InterPro"/>
</dbReference>
<dbReference type="GO" id="GO:0000049">
    <property type="term" value="F:tRNA binding"/>
    <property type="evidence" value="ECO:0007669"/>
    <property type="project" value="UniProtKB-UniRule"/>
</dbReference>
<dbReference type="GO" id="GO:0006412">
    <property type="term" value="P:translation"/>
    <property type="evidence" value="ECO:0007669"/>
    <property type="project" value="UniProtKB-UniRule"/>
</dbReference>
<dbReference type="CDD" id="cd03368">
    <property type="entry name" value="Ribosomal_S12"/>
    <property type="match status" value="1"/>
</dbReference>
<dbReference type="FunFam" id="2.40.50.140:FF:000001">
    <property type="entry name" value="30S ribosomal protein S12"/>
    <property type="match status" value="1"/>
</dbReference>
<dbReference type="Gene3D" id="2.40.50.140">
    <property type="entry name" value="Nucleic acid-binding proteins"/>
    <property type="match status" value="1"/>
</dbReference>
<dbReference type="HAMAP" id="MF_00403_B">
    <property type="entry name" value="Ribosomal_uS12_B"/>
    <property type="match status" value="1"/>
</dbReference>
<dbReference type="InterPro" id="IPR012340">
    <property type="entry name" value="NA-bd_OB-fold"/>
</dbReference>
<dbReference type="InterPro" id="IPR006032">
    <property type="entry name" value="Ribosomal_uS12"/>
</dbReference>
<dbReference type="InterPro" id="IPR005679">
    <property type="entry name" value="Ribosomal_uS12_bac"/>
</dbReference>
<dbReference type="NCBIfam" id="TIGR00981">
    <property type="entry name" value="rpsL_bact"/>
    <property type="match status" value="1"/>
</dbReference>
<dbReference type="PANTHER" id="PTHR11652">
    <property type="entry name" value="30S RIBOSOMAL PROTEIN S12 FAMILY MEMBER"/>
    <property type="match status" value="1"/>
</dbReference>
<dbReference type="Pfam" id="PF00164">
    <property type="entry name" value="Ribosom_S12_S23"/>
    <property type="match status" value="1"/>
</dbReference>
<dbReference type="PIRSF" id="PIRSF002133">
    <property type="entry name" value="Ribosomal_S12/S23"/>
    <property type="match status" value="1"/>
</dbReference>
<dbReference type="PRINTS" id="PR01034">
    <property type="entry name" value="RIBOSOMALS12"/>
</dbReference>
<dbReference type="SUPFAM" id="SSF50249">
    <property type="entry name" value="Nucleic acid-binding proteins"/>
    <property type="match status" value="1"/>
</dbReference>
<dbReference type="PROSITE" id="PS00055">
    <property type="entry name" value="RIBOSOMAL_S12"/>
    <property type="match status" value="1"/>
</dbReference>
<feature type="chain" id="PRO_1000194104" description="Small ribosomal subunit protein uS12">
    <location>
        <begin position="1"/>
        <end position="124"/>
    </location>
</feature>
<feature type="modified residue" description="3-methylthioaspartic acid" evidence="1">
    <location>
        <position position="89"/>
    </location>
</feature>
<proteinExistence type="inferred from homology"/>
<protein>
    <recommendedName>
        <fullName evidence="2">Small ribosomal subunit protein uS12</fullName>
    </recommendedName>
    <alternativeName>
        <fullName evidence="3">30S ribosomal protein S12</fullName>
    </alternativeName>
</protein>
<accession>B7GYN0</accession>
<keyword id="KW-0488">Methylation</keyword>
<keyword id="KW-0687">Ribonucleoprotein</keyword>
<keyword id="KW-0689">Ribosomal protein</keyword>
<keyword id="KW-0694">RNA-binding</keyword>
<keyword id="KW-0699">rRNA-binding</keyword>
<keyword id="KW-0820">tRNA-binding</keyword>